<protein>
    <recommendedName>
        <fullName>Vacuolar protein sorting-associated protein 55 homolog</fullName>
    </recommendedName>
</protein>
<sequence length="140" mass="15025">MADVPGYLRTCLDMGKIAFLAILVSTGIVLQILACALFNNWWPMLSVIMYVLLPMPLLFFGGSDSTSLFNESDNSWINAAKFLTGASAVGSVAIPSILKHAGLIGWGALALDLSSYVVFLVAILGYICIGDASDNYYSYI</sequence>
<keyword id="KW-0967">Endosome</keyword>
<keyword id="KW-0472">Membrane</keyword>
<keyword id="KW-0653">Protein transport</keyword>
<keyword id="KW-1185">Reference proteome</keyword>
<keyword id="KW-0812">Transmembrane</keyword>
<keyword id="KW-1133">Transmembrane helix</keyword>
<keyword id="KW-0813">Transport</keyword>
<proteinExistence type="evidence at transcript level"/>
<accession>Q9AST6</accession>
<accession>Q8LCQ6</accession>
<accession>Q9LQL7</accession>
<dbReference type="EMBL" id="AC007767">
    <property type="protein sequence ID" value="AAF81338.1"/>
    <property type="status" value="ALT_SEQ"/>
    <property type="molecule type" value="Genomic_DNA"/>
</dbReference>
<dbReference type="EMBL" id="CP002684">
    <property type="protein sequence ID" value="AEE31479.1"/>
    <property type="molecule type" value="Genomic_DNA"/>
</dbReference>
<dbReference type="EMBL" id="CP002684">
    <property type="protein sequence ID" value="AEE31480.1"/>
    <property type="molecule type" value="Genomic_DNA"/>
</dbReference>
<dbReference type="EMBL" id="CP002684">
    <property type="protein sequence ID" value="AEE31481.1"/>
    <property type="molecule type" value="Genomic_DNA"/>
</dbReference>
<dbReference type="EMBL" id="CP002684">
    <property type="protein sequence ID" value="AEE31482.1"/>
    <property type="molecule type" value="Genomic_DNA"/>
</dbReference>
<dbReference type="EMBL" id="CP002684">
    <property type="protein sequence ID" value="AEE31483.1"/>
    <property type="molecule type" value="Genomic_DNA"/>
</dbReference>
<dbReference type="EMBL" id="AF361848">
    <property type="protein sequence ID" value="AAK32860.1"/>
    <property type="molecule type" value="mRNA"/>
</dbReference>
<dbReference type="EMBL" id="AY066053">
    <property type="protein sequence ID" value="AAL47420.1"/>
    <property type="molecule type" value="mRNA"/>
</dbReference>
<dbReference type="EMBL" id="AK176917">
    <property type="protein sequence ID" value="BAD44680.1"/>
    <property type="molecule type" value="mRNA"/>
</dbReference>
<dbReference type="EMBL" id="AK230417">
    <property type="protein sequence ID" value="BAF02215.1"/>
    <property type="molecule type" value="mRNA"/>
</dbReference>
<dbReference type="EMBL" id="AY086458">
    <property type="protein sequence ID" value="AAM63461.1"/>
    <property type="molecule type" value="mRNA"/>
</dbReference>
<dbReference type="PIR" id="B86449">
    <property type="entry name" value="B86449"/>
</dbReference>
<dbReference type="RefSeq" id="NP_001077643.1">
    <property type="nucleotide sequence ID" value="NM_001084174.1"/>
</dbReference>
<dbReference type="RefSeq" id="NP_001077644.1">
    <property type="nucleotide sequence ID" value="NM_001084175.1"/>
</dbReference>
<dbReference type="RefSeq" id="NP_001077645.1">
    <property type="nucleotide sequence ID" value="NM_001084176.1"/>
</dbReference>
<dbReference type="RefSeq" id="NP_564400.1">
    <property type="nucleotide sequence ID" value="NM_102975.1"/>
</dbReference>
<dbReference type="RefSeq" id="NP_849741.1">
    <property type="nucleotide sequence ID" value="NM_179410.4"/>
</dbReference>
<dbReference type="BioGRID" id="25368">
    <property type="interactions" value="11"/>
</dbReference>
<dbReference type="FunCoup" id="Q9AST6">
    <property type="interactions" value="4020"/>
</dbReference>
<dbReference type="IntAct" id="Q9AST6">
    <property type="interactions" value="13"/>
</dbReference>
<dbReference type="PaxDb" id="3702-AT1G32410.3"/>
<dbReference type="ProteomicsDB" id="242649"/>
<dbReference type="EnsemblPlants" id="AT1G32410.1">
    <property type="protein sequence ID" value="AT1G32410.1"/>
    <property type="gene ID" value="AT1G32410"/>
</dbReference>
<dbReference type="EnsemblPlants" id="AT1G32410.2">
    <property type="protein sequence ID" value="AT1G32410.2"/>
    <property type="gene ID" value="AT1G32410"/>
</dbReference>
<dbReference type="EnsemblPlants" id="AT1G32410.3">
    <property type="protein sequence ID" value="AT1G32410.3"/>
    <property type="gene ID" value="AT1G32410"/>
</dbReference>
<dbReference type="EnsemblPlants" id="AT1G32410.4">
    <property type="protein sequence ID" value="AT1G32410.4"/>
    <property type="gene ID" value="AT1G32410"/>
</dbReference>
<dbReference type="EnsemblPlants" id="AT1G32410.5">
    <property type="protein sequence ID" value="AT1G32410.5"/>
    <property type="gene ID" value="AT1G32410"/>
</dbReference>
<dbReference type="GeneID" id="840134"/>
<dbReference type="Gramene" id="AT1G32410.1">
    <property type="protein sequence ID" value="AT1G32410.1"/>
    <property type="gene ID" value="AT1G32410"/>
</dbReference>
<dbReference type="Gramene" id="AT1G32410.2">
    <property type="protein sequence ID" value="AT1G32410.2"/>
    <property type="gene ID" value="AT1G32410"/>
</dbReference>
<dbReference type="Gramene" id="AT1G32410.3">
    <property type="protein sequence ID" value="AT1G32410.3"/>
    <property type="gene ID" value="AT1G32410"/>
</dbReference>
<dbReference type="Gramene" id="AT1G32410.4">
    <property type="protein sequence ID" value="AT1G32410.4"/>
    <property type="gene ID" value="AT1G32410"/>
</dbReference>
<dbReference type="Gramene" id="AT1G32410.5">
    <property type="protein sequence ID" value="AT1G32410.5"/>
    <property type="gene ID" value="AT1G32410"/>
</dbReference>
<dbReference type="KEGG" id="ath:AT1G32410"/>
<dbReference type="Araport" id="AT1G32410"/>
<dbReference type="TAIR" id="AT1G32410"/>
<dbReference type="eggNOG" id="KOG2174">
    <property type="taxonomic scope" value="Eukaryota"/>
</dbReference>
<dbReference type="HOGENOM" id="CLU_134810_1_0_1"/>
<dbReference type="InParanoid" id="Q9AST6"/>
<dbReference type="OMA" id="ICARCAN"/>
<dbReference type="PhylomeDB" id="Q9AST6"/>
<dbReference type="PRO" id="PR:Q9AST6"/>
<dbReference type="Proteomes" id="UP000006548">
    <property type="component" value="Chromosome 1"/>
</dbReference>
<dbReference type="ExpressionAtlas" id="Q9AST6">
    <property type="expression patterns" value="baseline and differential"/>
</dbReference>
<dbReference type="GO" id="GO:0010008">
    <property type="term" value="C:endosome membrane"/>
    <property type="evidence" value="ECO:0007669"/>
    <property type="project" value="UniProtKB-SubCell"/>
</dbReference>
<dbReference type="GO" id="GO:0000325">
    <property type="term" value="C:plant-type vacuole"/>
    <property type="evidence" value="ECO:0007005"/>
    <property type="project" value="TAIR"/>
</dbReference>
<dbReference type="GO" id="GO:0015031">
    <property type="term" value="P:protein transport"/>
    <property type="evidence" value="ECO:0007669"/>
    <property type="project" value="UniProtKB-KW"/>
</dbReference>
<dbReference type="InterPro" id="IPR007262">
    <property type="entry name" value="Vps55/LEPROT"/>
</dbReference>
<dbReference type="PANTHER" id="PTHR12050">
    <property type="entry name" value="LEPTIN RECEPTOR-RELATED"/>
    <property type="match status" value="1"/>
</dbReference>
<dbReference type="PANTHER" id="PTHR12050:SF1">
    <property type="entry name" value="VACUOLAR PROTEIN SORTING-ASSOCIATED PROTEIN 55 HOMOLOG"/>
    <property type="match status" value="1"/>
</dbReference>
<dbReference type="Pfam" id="PF04133">
    <property type="entry name" value="Vps55"/>
    <property type="match status" value="1"/>
</dbReference>
<organism>
    <name type="scientific">Arabidopsis thaliana</name>
    <name type="common">Mouse-ear cress</name>
    <dbReference type="NCBI Taxonomy" id="3702"/>
    <lineage>
        <taxon>Eukaryota</taxon>
        <taxon>Viridiplantae</taxon>
        <taxon>Streptophyta</taxon>
        <taxon>Embryophyta</taxon>
        <taxon>Tracheophyta</taxon>
        <taxon>Spermatophyta</taxon>
        <taxon>Magnoliopsida</taxon>
        <taxon>eudicotyledons</taxon>
        <taxon>Gunneridae</taxon>
        <taxon>Pentapetalae</taxon>
        <taxon>rosids</taxon>
        <taxon>malvids</taxon>
        <taxon>Brassicales</taxon>
        <taxon>Brassicaceae</taxon>
        <taxon>Camelineae</taxon>
        <taxon>Arabidopsis</taxon>
    </lineage>
</organism>
<comment type="function">
    <text evidence="1">Involved in endosomal protein transport.</text>
</comment>
<comment type="subcellular location">
    <subcellularLocation>
        <location evidence="1">Endosome membrane</location>
        <topology evidence="1">Multi-pass membrane protein</topology>
    </subcellularLocation>
</comment>
<comment type="similarity">
    <text evidence="3">Belongs to the OB-RGRP/VPS55 family.</text>
</comment>
<comment type="sequence caution" evidence="3">
    <conflict type="erroneous gene model prediction">
        <sequence resource="EMBL-CDS" id="AAF81338"/>
    </conflict>
    <text>The predicted gene has been split into 2 genes: At1g32410 and At1g32415.</text>
</comment>
<gene>
    <name type="ordered locus">At1g32410</name>
    <name type="ORF">F5D14.32</name>
</gene>
<feature type="chain" id="PRO_0000342739" description="Vacuolar protein sorting-associated protein 55 homolog">
    <location>
        <begin position="1"/>
        <end position="140"/>
    </location>
</feature>
<feature type="topological domain" description="Cytoplasmic" evidence="2">
    <location>
        <begin position="1"/>
        <end position="16"/>
    </location>
</feature>
<feature type="transmembrane region" description="Helical" evidence="2">
    <location>
        <begin position="17"/>
        <end position="37"/>
    </location>
</feature>
<feature type="topological domain" description="Lumenal" evidence="2">
    <location>
        <begin position="38"/>
        <end position="40"/>
    </location>
</feature>
<feature type="transmembrane region" description="Helical" evidence="2">
    <location>
        <begin position="41"/>
        <end position="61"/>
    </location>
</feature>
<feature type="topological domain" description="Cytoplasmic" evidence="2">
    <location>
        <begin position="62"/>
        <end position="75"/>
    </location>
</feature>
<feature type="transmembrane region" description="Helical" evidence="2">
    <location>
        <begin position="76"/>
        <end position="98"/>
    </location>
</feature>
<feature type="topological domain" description="Lumenal" evidence="2">
    <location>
        <begin position="99"/>
        <end position="108"/>
    </location>
</feature>
<feature type="transmembrane region" description="Helical" evidence="2">
    <location>
        <begin position="109"/>
        <end position="129"/>
    </location>
</feature>
<feature type="topological domain" description="Cytoplasmic" evidence="2">
    <location>
        <begin position="130"/>
        <end position="140"/>
    </location>
</feature>
<feature type="sequence conflict" description="In Ref. 5; AAM63461." evidence="3" ref="5">
    <original>V</original>
    <variation>L</variation>
    <location>
        <position position="117"/>
    </location>
</feature>
<feature type="sequence conflict" description="In Ref. 5; AAM63461." evidence="3" ref="5">
    <original>D</original>
    <variation>E</variation>
    <location>
        <position position="134"/>
    </location>
</feature>
<evidence type="ECO:0000250" key="1"/>
<evidence type="ECO:0000255" key="2"/>
<evidence type="ECO:0000305" key="3"/>
<reference key="1">
    <citation type="journal article" date="2000" name="Nature">
        <title>Sequence and analysis of chromosome 1 of the plant Arabidopsis thaliana.</title>
        <authorList>
            <person name="Theologis A."/>
            <person name="Ecker J.R."/>
            <person name="Palm C.J."/>
            <person name="Federspiel N.A."/>
            <person name="Kaul S."/>
            <person name="White O."/>
            <person name="Alonso J."/>
            <person name="Altafi H."/>
            <person name="Araujo R."/>
            <person name="Bowman C.L."/>
            <person name="Brooks S.Y."/>
            <person name="Buehler E."/>
            <person name="Chan A."/>
            <person name="Chao Q."/>
            <person name="Chen H."/>
            <person name="Cheuk R.F."/>
            <person name="Chin C.W."/>
            <person name="Chung M.K."/>
            <person name="Conn L."/>
            <person name="Conway A.B."/>
            <person name="Conway A.R."/>
            <person name="Creasy T.H."/>
            <person name="Dewar K."/>
            <person name="Dunn P."/>
            <person name="Etgu P."/>
            <person name="Feldblyum T.V."/>
            <person name="Feng J.-D."/>
            <person name="Fong B."/>
            <person name="Fujii C.Y."/>
            <person name="Gill J.E."/>
            <person name="Goldsmith A.D."/>
            <person name="Haas B."/>
            <person name="Hansen N.F."/>
            <person name="Hughes B."/>
            <person name="Huizar L."/>
            <person name="Hunter J.L."/>
            <person name="Jenkins J."/>
            <person name="Johnson-Hopson C."/>
            <person name="Khan S."/>
            <person name="Khaykin E."/>
            <person name="Kim C.J."/>
            <person name="Koo H.L."/>
            <person name="Kremenetskaia I."/>
            <person name="Kurtz D.B."/>
            <person name="Kwan A."/>
            <person name="Lam B."/>
            <person name="Langin-Hooper S."/>
            <person name="Lee A."/>
            <person name="Lee J.M."/>
            <person name="Lenz C.A."/>
            <person name="Li J.H."/>
            <person name="Li Y.-P."/>
            <person name="Lin X."/>
            <person name="Liu S.X."/>
            <person name="Liu Z.A."/>
            <person name="Luros J.S."/>
            <person name="Maiti R."/>
            <person name="Marziali A."/>
            <person name="Militscher J."/>
            <person name="Miranda M."/>
            <person name="Nguyen M."/>
            <person name="Nierman W.C."/>
            <person name="Osborne B.I."/>
            <person name="Pai G."/>
            <person name="Peterson J."/>
            <person name="Pham P.K."/>
            <person name="Rizzo M."/>
            <person name="Rooney T."/>
            <person name="Rowley D."/>
            <person name="Sakano H."/>
            <person name="Salzberg S.L."/>
            <person name="Schwartz J.R."/>
            <person name="Shinn P."/>
            <person name="Southwick A.M."/>
            <person name="Sun H."/>
            <person name="Tallon L.J."/>
            <person name="Tambunga G."/>
            <person name="Toriumi M.J."/>
            <person name="Town C.D."/>
            <person name="Utterback T."/>
            <person name="Van Aken S."/>
            <person name="Vaysberg M."/>
            <person name="Vysotskaia V.S."/>
            <person name="Walker M."/>
            <person name="Wu D."/>
            <person name="Yu G."/>
            <person name="Fraser C.M."/>
            <person name="Venter J.C."/>
            <person name="Davis R.W."/>
        </authorList>
    </citation>
    <scope>NUCLEOTIDE SEQUENCE [LARGE SCALE GENOMIC DNA]</scope>
    <source>
        <strain>cv. Columbia</strain>
    </source>
</reference>
<reference key="2">
    <citation type="journal article" date="2017" name="Plant J.">
        <title>Araport11: a complete reannotation of the Arabidopsis thaliana reference genome.</title>
        <authorList>
            <person name="Cheng C.Y."/>
            <person name="Krishnakumar V."/>
            <person name="Chan A.P."/>
            <person name="Thibaud-Nissen F."/>
            <person name="Schobel S."/>
            <person name="Town C.D."/>
        </authorList>
    </citation>
    <scope>GENOME REANNOTATION</scope>
    <source>
        <strain>cv. Columbia</strain>
    </source>
</reference>
<reference key="3">
    <citation type="journal article" date="2003" name="Science">
        <title>Empirical analysis of transcriptional activity in the Arabidopsis genome.</title>
        <authorList>
            <person name="Yamada K."/>
            <person name="Lim J."/>
            <person name="Dale J.M."/>
            <person name="Chen H."/>
            <person name="Shinn P."/>
            <person name="Palm C.J."/>
            <person name="Southwick A.M."/>
            <person name="Wu H.C."/>
            <person name="Kim C.J."/>
            <person name="Nguyen M."/>
            <person name="Pham P.K."/>
            <person name="Cheuk R.F."/>
            <person name="Karlin-Newmann G."/>
            <person name="Liu S.X."/>
            <person name="Lam B."/>
            <person name="Sakano H."/>
            <person name="Wu T."/>
            <person name="Yu G."/>
            <person name="Miranda M."/>
            <person name="Quach H.L."/>
            <person name="Tripp M."/>
            <person name="Chang C.H."/>
            <person name="Lee J.M."/>
            <person name="Toriumi M.J."/>
            <person name="Chan M.M."/>
            <person name="Tang C.C."/>
            <person name="Onodera C.S."/>
            <person name="Deng J.M."/>
            <person name="Akiyama K."/>
            <person name="Ansari Y."/>
            <person name="Arakawa T."/>
            <person name="Banh J."/>
            <person name="Banno F."/>
            <person name="Bowser L."/>
            <person name="Brooks S.Y."/>
            <person name="Carninci P."/>
            <person name="Chao Q."/>
            <person name="Choy N."/>
            <person name="Enju A."/>
            <person name="Goldsmith A.D."/>
            <person name="Gurjal M."/>
            <person name="Hansen N.F."/>
            <person name="Hayashizaki Y."/>
            <person name="Johnson-Hopson C."/>
            <person name="Hsuan V.W."/>
            <person name="Iida K."/>
            <person name="Karnes M."/>
            <person name="Khan S."/>
            <person name="Koesema E."/>
            <person name="Ishida J."/>
            <person name="Jiang P.X."/>
            <person name="Jones T."/>
            <person name="Kawai J."/>
            <person name="Kamiya A."/>
            <person name="Meyers C."/>
            <person name="Nakajima M."/>
            <person name="Narusaka M."/>
            <person name="Seki M."/>
            <person name="Sakurai T."/>
            <person name="Satou M."/>
            <person name="Tamse R."/>
            <person name="Vaysberg M."/>
            <person name="Wallender E.K."/>
            <person name="Wong C."/>
            <person name="Yamamura Y."/>
            <person name="Yuan S."/>
            <person name="Shinozaki K."/>
            <person name="Davis R.W."/>
            <person name="Theologis A."/>
            <person name="Ecker J.R."/>
        </authorList>
    </citation>
    <scope>NUCLEOTIDE SEQUENCE [LARGE SCALE MRNA]</scope>
    <source>
        <strain>cv. Columbia</strain>
    </source>
</reference>
<reference key="4">
    <citation type="submission" date="2006-07" db="EMBL/GenBank/DDBJ databases">
        <title>Large-scale analysis of RIKEN Arabidopsis full-length (RAFL) cDNAs.</title>
        <authorList>
            <person name="Totoki Y."/>
            <person name="Seki M."/>
            <person name="Ishida J."/>
            <person name="Nakajima M."/>
            <person name="Enju A."/>
            <person name="Kamiya A."/>
            <person name="Narusaka M."/>
            <person name="Shin-i T."/>
            <person name="Nakagawa M."/>
            <person name="Sakamoto N."/>
            <person name="Oishi K."/>
            <person name="Kohara Y."/>
            <person name="Kobayashi M."/>
            <person name="Toyoda A."/>
            <person name="Sakaki Y."/>
            <person name="Sakurai T."/>
            <person name="Iida K."/>
            <person name="Akiyama K."/>
            <person name="Satou M."/>
            <person name="Toyoda T."/>
            <person name="Konagaya A."/>
            <person name="Carninci P."/>
            <person name="Kawai J."/>
            <person name="Hayashizaki Y."/>
            <person name="Shinozaki K."/>
        </authorList>
    </citation>
    <scope>NUCLEOTIDE SEQUENCE [LARGE SCALE MRNA]</scope>
    <source>
        <strain>cv. Columbia</strain>
    </source>
</reference>
<reference key="5">
    <citation type="submission" date="2002-03" db="EMBL/GenBank/DDBJ databases">
        <title>Full-length cDNA from Arabidopsis thaliana.</title>
        <authorList>
            <person name="Brover V.V."/>
            <person name="Troukhan M.E."/>
            <person name="Alexandrov N.A."/>
            <person name="Lu Y.-P."/>
            <person name="Flavell R.B."/>
            <person name="Feldmann K.A."/>
        </authorList>
    </citation>
    <scope>NUCLEOTIDE SEQUENCE [LARGE SCALE MRNA]</scope>
</reference>
<name>VSP55_ARATH</name>